<gene>
    <name type="primary">DAPB</name>
    <name type="ORF">CPC735_039860</name>
</gene>
<name>DAPB_COCP7</name>
<sequence length="917" mass="102500">MGVEKRINDEEMQPLAERDDKSRDSIDSTSTASISLALLGGANGSAHGSRAARTRKSENQEKYHDDEEEGDLEEGFVPPAGGWSAPRKVSVIFTLIVTLCIAGWLVAFFVLLGRHKDSSKDAAVSQGESNIIPGIYSGGRGGKKLDLDGVLFGNWSPKSHDISWFPGPNGADGLLLEQGGDRNKAYLRVEDIRSRNPGNKADDTIVLMRESSFMVGKRLVRPSKVWPSPDLKTVLVMSDQRKNWRHSYTGNYWIFDVETQTGEPLDPESLDGGIQLASWSPNSDAIVFTRKNNMFIRRLPSKNVKQITTDGGTNLFYGIPDWVYEEEVFSDSSATWWDGDGKFVAFLRTNESRVPEYPVQYFIPNTNKPSRPSEENYPDIRKIKYPKAGAPNPVVNIQFFDVEKEEVFSVDVKDDLPDDDRLVIGVTWASNGNVLVRETNRESDRLSVVLIDAAKRAGKVVRSRNFSSLDGGWVEPSQTTHFVPADPKNGRPHDGYIETIPHDGFEHLAYFTPMDNSEPTVLTSGDWEVVDAPSAVDLKRGLVYFVAAKENPTERHIYTVKLDGSDLQPIVDTKSAGYYSISLSAGAGYALLKYEGPDIPWQKVISTPANEEKYEESIEKNPGLADMARKYALPSLHYQTITISGYELQVVERRPANFNPDKKYPVLFHLYGGPGSQTVTKKFKVDFQSYVASNLGYIVVTVDGRGTGFIGRKARCAVRGNLGHYEAIDQIETAKAWGKRSYVDAGRMAIWGWSYGGFMTLKTLEQDAGQTFQYGMAVAPVTDWRFYDSIYTERYMHTPQNNPEGYDRSAISNVTALDQAVRFMIVHGSGDDNVHIQNTLTLLDKLDLGSVKNFDVHVYPDSDHSIYFHNANKMVYQRLSDWLVNAFNGEWVKTRDPIPHKSLARRALGLINILRNG</sequence>
<reference key="1">
    <citation type="journal article" date="2009" name="Genome Res.">
        <title>Comparative genomic analyses of the human fungal pathogens Coccidioides and their relatives.</title>
        <authorList>
            <person name="Sharpton T.J."/>
            <person name="Stajich J.E."/>
            <person name="Rounsley S.D."/>
            <person name="Gardner M.J."/>
            <person name="Wortman J.R."/>
            <person name="Jordar V.S."/>
            <person name="Maiti R."/>
            <person name="Kodira C.D."/>
            <person name="Neafsey D.E."/>
            <person name="Zeng Q."/>
            <person name="Hung C.-Y."/>
            <person name="McMahan C."/>
            <person name="Muszewska A."/>
            <person name="Grynberg M."/>
            <person name="Mandel M.A."/>
            <person name="Kellner E.M."/>
            <person name="Barker B.M."/>
            <person name="Galgiani J.N."/>
            <person name="Orbach M.J."/>
            <person name="Kirkland T.N."/>
            <person name="Cole G.T."/>
            <person name="Henn M.R."/>
            <person name="Birren B.W."/>
            <person name="Taylor J.W."/>
        </authorList>
    </citation>
    <scope>NUCLEOTIDE SEQUENCE [LARGE SCALE GENOMIC DNA]</scope>
    <source>
        <strain>C735</strain>
    </source>
</reference>
<feature type="chain" id="PRO_0000412142" description="Probable dipeptidyl-aminopeptidase B">
    <location>
        <begin position="1"/>
        <end position="917"/>
    </location>
</feature>
<feature type="topological domain" description="Cytoplasmic" evidence="2">
    <location>
        <begin position="1"/>
        <end position="90"/>
    </location>
</feature>
<feature type="transmembrane region" description="Helical; Signal-anchor for type II membrane protein" evidence="2">
    <location>
        <begin position="91"/>
        <end position="111"/>
    </location>
</feature>
<feature type="topological domain" description="Vacuolar" evidence="2">
    <location>
        <begin position="112"/>
        <end position="917"/>
    </location>
</feature>
<feature type="region of interest" description="Disordered" evidence="3">
    <location>
        <begin position="1"/>
        <end position="78"/>
    </location>
</feature>
<feature type="compositionally biased region" description="Basic and acidic residues" evidence="3">
    <location>
        <begin position="16"/>
        <end position="26"/>
    </location>
</feature>
<feature type="compositionally biased region" description="Low complexity" evidence="3">
    <location>
        <begin position="27"/>
        <end position="49"/>
    </location>
</feature>
<feature type="compositionally biased region" description="Basic and acidic residues" evidence="3">
    <location>
        <begin position="55"/>
        <end position="65"/>
    </location>
</feature>
<feature type="active site" description="Charge relay system" evidence="1">
    <location>
        <position position="754"/>
    </location>
</feature>
<feature type="active site" description="Charge relay system" evidence="1">
    <location>
        <position position="831"/>
    </location>
</feature>
<feature type="active site" description="Charge relay system" evidence="1">
    <location>
        <position position="864"/>
    </location>
</feature>
<feature type="glycosylation site" description="N-linked (GlcNAc...) asparagine" evidence="2">
    <location>
        <position position="350"/>
    </location>
</feature>
<feature type="glycosylation site" description="N-linked (GlcNAc...) asparagine" evidence="2">
    <location>
        <position position="465"/>
    </location>
</feature>
<feature type="glycosylation site" description="N-linked (GlcNAc...) asparagine" evidence="2">
    <location>
        <position position="813"/>
    </location>
</feature>
<dbReference type="EC" id="3.4.14.5"/>
<dbReference type="EMBL" id="ACFW01000014">
    <property type="protein sequence ID" value="EER28722.1"/>
    <property type="molecule type" value="Genomic_DNA"/>
</dbReference>
<dbReference type="RefSeq" id="XP_003070867.1">
    <property type="nucleotide sequence ID" value="XM_003070821.1"/>
</dbReference>
<dbReference type="SMR" id="C5P334"/>
<dbReference type="ESTHER" id="cocp7-dapb">
    <property type="family name" value="DPP4N_Peptidase_S9"/>
</dbReference>
<dbReference type="MEROPS" id="S09.006"/>
<dbReference type="GlyCosmos" id="C5P334">
    <property type="glycosylation" value="3 sites, No reported glycans"/>
</dbReference>
<dbReference type="KEGG" id="cpw:9696361"/>
<dbReference type="VEuPathDB" id="FungiDB:CPC735_039860"/>
<dbReference type="HOGENOM" id="CLU_006105_0_1_1"/>
<dbReference type="OrthoDB" id="16520at2759"/>
<dbReference type="Proteomes" id="UP000009084">
    <property type="component" value="Unassembled WGS sequence"/>
</dbReference>
<dbReference type="GO" id="GO:0005886">
    <property type="term" value="C:plasma membrane"/>
    <property type="evidence" value="ECO:0007669"/>
    <property type="project" value="TreeGrafter"/>
</dbReference>
<dbReference type="GO" id="GO:0005774">
    <property type="term" value="C:vacuolar membrane"/>
    <property type="evidence" value="ECO:0007669"/>
    <property type="project" value="UniProtKB-SubCell"/>
</dbReference>
<dbReference type="GO" id="GO:0004177">
    <property type="term" value="F:aminopeptidase activity"/>
    <property type="evidence" value="ECO:0007669"/>
    <property type="project" value="UniProtKB-KW"/>
</dbReference>
<dbReference type="GO" id="GO:0008239">
    <property type="term" value="F:dipeptidyl-peptidase activity"/>
    <property type="evidence" value="ECO:0007669"/>
    <property type="project" value="UniProtKB-EC"/>
</dbReference>
<dbReference type="GO" id="GO:0008236">
    <property type="term" value="F:serine-type peptidase activity"/>
    <property type="evidence" value="ECO:0007669"/>
    <property type="project" value="UniProtKB-KW"/>
</dbReference>
<dbReference type="GO" id="GO:0006508">
    <property type="term" value="P:proteolysis"/>
    <property type="evidence" value="ECO:0007669"/>
    <property type="project" value="UniProtKB-KW"/>
</dbReference>
<dbReference type="FunFam" id="3.40.50.1820:FF:000003">
    <property type="entry name" value="Dipeptidyl peptidase 4"/>
    <property type="match status" value="1"/>
</dbReference>
<dbReference type="Gene3D" id="3.40.50.1820">
    <property type="entry name" value="alpha/beta hydrolase"/>
    <property type="match status" value="1"/>
</dbReference>
<dbReference type="Gene3D" id="2.140.10.30">
    <property type="entry name" value="Dipeptidylpeptidase IV, N-terminal domain"/>
    <property type="match status" value="1"/>
</dbReference>
<dbReference type="InterPro" id="IPR029058">
    <property type="entry name" value="AB_hydrolase_fold"/>
</dbReference>
<dbReference type="InterPro" id="IPR001375">
    <property type="entry name" value="Peptidase_S9_cat"/>
</dbReference>
<dbReference type="InterPro" id="IPR002469">
    <property type="entry name" value="Peptidase_S9B_N"/>
</dbReference>
<dbReference type="InterPro" id="IPR050278">
    <property type="entry name" value="Serine_Prot_S9B/DPPIV"/>
</dbReference>
<dbReference type="PANTHER" id="PTHR11731:SF200">
    <property type="entry name" value="DIPEPTIDYL PEPTIDASE 10, ISOFORM B"/>
    <property type="match status" value="1"/>
</dbReference>
<dbReference type="PANTHER" id="PTHR11731">
    <property type="entry name" value="PROTEASE FAMILY S9B,C DIPEPTIDYL-PEPTIDASE IV-RELATED"/>
    <property type="match status" value="1"/>
</dbReference>
<dbReference type="Pfam" id="PF00930">
    <property type="entry name" value="DPPIV_N"/>
    <property type="match status" value="1"/>
</dbReference>
<dbReference type="Pfam" id="PF00326">
    <property type="entry name" value="Peptidase_S9"/>
    <property type="match status" value="1"/>
</dbReference>
<dbReference type="SUPFAM" id="SSF53474">
    <property type="entry name" value="alpha/beta-Hydrolases"/>
    <property type="match status" value="1"/>
</dbReference>
<dbReference type="SUPFAM" id="SSF82171">
    <property type="entry name" value="DPP6 N-terminal domain-like"/>
    <property type="match status" value="1"/>
</dbReference>
<evidence type="ECO:0000250" key="1"/>
<evidence type="ECO:0000255" key="2"/>
<evidence type="ECO:0000256" key="3">
    <source>
        <dbReference type="SAM" id="MobiDB-lite"/>
    </source>
</evidence>
<evidence type="ECO:0000305" key="4"/>
<proteinExistence type="inferred from homology"/>
<keyword id="KW-0031">Aminopeptidase</keyword>
<keyword id="KW-0325">Glycoprotein</keyword>
<keyword id="KW-0378">Hydrolase</keyword>
<keyword id="KW-0472">Membrane</keyword>
<keyword id="KW-0645">Protease</keyword>
<keyword id="KW-0720">Serine protease</keyword>
<keyword id="KW-0735">Signal-anchor</keyword>
<keyword id="KW-0812">Transmembrane</keyword>
<keyword id="KW-1133">Transmembrane helix</keyword>
<keyword id="KW-0926">Vacuole</keyword>
<comment type="function">
    <text evidence="1">Type IV dipeptidyl-peptidase which removes N-terminal dipeptides sequentially from polypeptides having unsubstituted N-termini provided that the penultimate residue is proline.</text>
</comment>
<comment type="catalytic activity">
    <reaction>
        <text>Release of an N-terminal dipeptide, Xaa-Yaa-|-Zaa-, from a polypeptide, preferentially when Yaa is Pro, provided Zaa is neither Pro nor hydroxyproline.</text>
        <dbReference type="EC" id="3.4.14.5"/>
    </reaction>
</comment>
<comment type="subcellular location">
    <subcellularLocation>
        <location evidence="1">Vacuole membrane</location>
        <topology evidence="1">Single-pass type II membrane protein</topology>
    </subcellularLocation>
    <text evidence="1">Lysosome-like vacuoles.</text>
</comment>
<comment type="similarity">
    <text evidence="4">Belongs to the peptidase S9B family.</text>
</comment>
<protein>
    <recommendedName>
        <fullName>Probable dipeptidyl-aminopeptidase B</fullName>
        <shortName>DPAP B</shortName>
        <ecNumber>3.4.14.5</ecNumber>
    </recommendedName>
</protein>
<accession>C5P334</accession>
<organism>
    <name type="scientific">Coccidioides posadasii (strain C735)</name>
    <name type="common">Valley fever fungus</name>
    <dbReference type="NCBI Taxonomy" id="222929"/>
    <lineage>
        <taxon>Eukaryota</taxon>
        <taxon>Fungi</taxon>
        <taxon>Dikarya</taxon>
        <taxon>Ascomycota</taxon>
        <taxon>Pezizomycotina</taxon>
        <taxon>Eurotiomycetes</taxon>
        <taxon>Eurotiomycetidae</taxon>
        <taxon>Onygenales</taxon>
        <taxon>Onygenaceae</taxon>
        <taxon>Coccidioides</taxon>
    </lineage>
</organism>